<name>M2_I78AC</name>
<feature type="chain" id="PRO_0000326364" description="Matrix protein 2">
    <location>
        <begin position="1"/>
        <end position="97"/>
    </location>
</feature>
<feature type="topological domain" description="Virion surface" evidence="1">
    <location>
        <begin position="1"/>
        <end position="22"/>
    </location>
</feature>
<feature type="transmembrane region" description="Helical; Signal-anchor for type III membrane protein" evidence="1">
    <location>
        <begin position="23"/>
        <end position="43"/>
    </location>
</feature>
<feature type="topological domain" description="Intravirion" evidence="1">
    <location>
        <begin position="44"/>
        <end position="97"/>
    </location>
</feature>
<feature type="region of interest" description="Disordered" evidence="2">
    <location>
        <begin position="60"/>
        <end position="83"/>
    </location>
</feature>
<feature type="site" description="Essential for channel activity, possibly by being protonated during channel activation, and by forming the channel gate and the selective filter" evidence="1">
    <location>
        <position position="37"/>
    </location>
</feature>
<feature type="site" description="Seems to be involved in pH gating" evidence="1">
    <location>
        <position position="41"/>
    </location>
</feature>
<feature type="modified residue" description="Phosphoserine; by host" evidence="1">
    <location>
        <position position="64"/>
    </location>
</feature>
<feature type="modified residue" description="Phosphoserine; by host" evidence="1">
    <location>
        <position position="82"/>
    </location>
</feature>
<feature type="lipid moiety-binding region" description="S-palmitoyl cysteine; by host" evidence="1">
    <location>
        <position position="50"/>
    </location>
</feature>
<feature type="disulfide bond" description="Interchain (with C-17)" evidence="1">
    <location>
        <position position="17"/>
    </location>
</feature>
<feature type="disulfide bond" description="Interchain (with C-19)" evidence="1">
    <location>
        <position position="19"/>
    </location>
</feature>
<comment type="function">
    <text evidence="1">Forms a proton-selective ion channel that is necessary for the efficient release of the viral genome during virus entry. After attaching to the cell surface, the virion enters the cell by endocytosis. Acidification of the endosome triggers M2 ion channel activity. The influx of protons into virion interior is believed to disrupt interactions between the viral ribonucleoprotein (RNP), matrix protein 1 (M1), and lipid bilayers, thereby freeing the viral genome from interaction with viral proteins and enabling RNA segments to migrate to the host cell nucleus, where influenza virus RNA transcription and replication occur. Also plays a role in viral proteins secretory pathway. Elevates the intravesicular pH of normally acidic compartments, such as trans-Golgi network, preventing newly formed hemagglutinin from premature switching to the fusion-active conformation.</text>
</comment>
<comment type="activity regulation">
    <text>The M2 protein from most influenza A strains is inhibited by amantadine and rimantadine, resulting in viral uncoating incapacity. Emergence of amantadine-resistant variants is usually rapid.</text>
</comment>
<comment type="subunit">
    <text evidence="1">Homotetramer; composed of two disulfide-linked dimers held together by non-covalent interactions. May interact with matrix protein 1.</text>
</comment>
<comment type="subcellular location">
    <subcellularLocation>
        <location evidence="1">Virion membrane</location>
    </subcellularLocation>
    <subcellularLocation>
        <location evidence="1">Host apical cell membrane</location>
        <topology evidence="1">Single-pass type III membrane protein</topology>
    </subcellularLocation>
    <text evidence="1">Abundantly expressed at the apical plasma membrane in infected polarized epithelial cells, in close proximity to budding and assembled virions. Minor component of virions (only 16-20 molecules/virion).</text>
</comment>
<comment type="alternative products">
    <event type="alternative splicing"/>
    <isoform>
        <id>Q0A3Q8-1</id>
        <name>M2</name>
        <sequence type="displayed"/>
    </isoform>
    <isoform>
        <id>Q0A3Q7-1</id>
        <name>M1</name>
        <sequence type="external"/>
    </isoform>
    <text>Only the first 9 residues are shared by the 2 isoforms.</text>
</comment>
<comment type="domain">
    <text evidence="1">Cytoplasmic tail plays an important role in virion assembly and morphogenesis.</text>
</comment>
<comment type="miscellaneous">
    <text evidence="1">When the channel is activated, one or more imidazole moieties of His-37 probably become bi-protonated.</text>
</comment>
<comment type="similarity">
    <text evidence="1">Belongs to the influenza viruses matrix protein M2 family.</text>
</comment>
<organism>
    <name type="scientific">Influenza A virus (strain A/Turkey/Minnesota/501/1978 H6N8)</name>
    <dbReference type="NCBI Taxonomy" id="387259"/>
    <lineage>
        <taxon>Viruses</taxon>
        <taxon>Riboviria</taxon>
        <taxon>Orthornavirae</taxon>
        <taxon>Negarnaviricota</taxon>
        <taxon>Polyploviricotina</taxon>
        <taxon>Insthoviricetes</taxon>
        <taxon>Articulavirales</taxon>
        <taxon>Orthomyxoviridae</taxon>
        <taxon>Alphainfluenzavirus</taxon>
        <taxon>Alphainfluenzavirus influenzae</taxon>
        <taxon>Influenza A virus</taxon>
    </lineage>
</organism>
<evidence type="ECO:0000255" key="1">
    <source>
        <dbReference type="HAMAP-Rule" id="MF_04069"/>
    </source>
</evidence>
<evidence type="ECO:0000256" key="2">
    <source>
        <dbReference type="SAM" id="MobiDB-lite"/>
    </source>
</evidence>
<organismHost>
    <name type="scientific">Aves</name>
    <dbReference type="NCBI Taxonomy" id="8782"/>
</organismHost>
<accession>Q0A3Q8</accession>
<proteinExistence type="inferred from homology"/>
<sequence length="97" mass="11158">MSLLTEVETPTRNGWECKCSDSSDPLVIAASIIGILHLILWILDRLFFKCIYRRIKYGLKRGPSTEGVPESMREEYRQEQQSAVDVDDGHFVNIELE</sequence>
<dbReference type="EMBL" id="CY014772">
    <property type="protein sequence ID" value="ABI84675.1"/>
    <property type="molecule type" value="Genomic_RNA"/>
</dbReference>
<dbReference type="SMR" id="Q0A3Q8"/>
<dbReference type="GO" id="GO:0020002">
    <property type="term" value="C:host cell plasma membrane"/>
    <property type="evidence" value="ECO:0007669"/>
    <property type="project" value="UniProtKB-SubCell"/>
</dbReference>
<dbReference type="GO" id="GO:0016020">
    <property type="term" value="C:membrane"/>
    <property type="evidence" value="ECO:0007669"/>
    <property type="project" value="UniProtKB-UniRule"/>
</dbReference>
<dbReference type="GO" id="GO:0055036">
    <property type="term" value="C:virion membrane"/>
    <property type="evidence" value="ECO:0007669"/>
    <property type="project" value="UniProtKB-SubCell"/>
</dbReference>
<dbReference type="GO" id="GO:0005216">
    <property type="term" value="F:monoatomic ion channel activity"/>
    <property type="evidence" value="ECO:0007669"/>
    <property type="project" value="UniProtKB-UniRule"/>
</dbReference>
<dbReference type="GO" id="GO:0015078">
    <property type="term" value="F:proton transmembrane transporter activity"/>
    <property type="evidence" value="ECO:0007669"/>
    <property type="project" value="UniProtKB-UniRule"/>
</dbReference>
<dbReference type="GO" id="GO:0051259">
    <property type="term" value="P:protein complex oligomerization"/>
    <property type="evidence" value="ECO:0007669"/>
    <property type="project" value="UniProtKB-UniRule"/>
</dbReference>
<dbReference type="GO" id="GO:0044694">
    <property type="term" value="P:symbiont genome entry into host cell via pore formation in plasma membrane"/>
    <property type="evidence" value="ECO:0007669"/>
    <property type="project" value="UniProtKB-UniRule"/>
</dbReference>
<dbReference type="GO" id="GO:0140321">
    <property type="term" value="P:symbiont-mediated suppression of host autophagy"/>
    <property type="evidence" value="ECO:0007669"/>
    <property type="project" value="UniProtKB-KW"/>
</dbReference>
<dbReference type="Gene3D" id="6.10.250.1640">
    <property type="match status" value="1"/>
</dbReference>
<dbReference type="HAMAP" id="MF_04069">
    <property type="entry name" value="INFV_M2"/>
    <property type="match status" value="1"/>
</dbReference>
<dbReference type="InterPro" id="IPR002089">
    <property type="entry name" value="Flu_M2"/>
</dbReference>
<dbReference type="Pfam" id="PF00599">
    <property type="entry name" value="Flu_M2"/>
    <property type="match status" value="1"/>
</dbReference>
<keyword id="KW-0025">Alternative splicing</keyword>
<keyword id="KW-1015">Disulfide bond</keyword>
<keyword id="KW-1032">Host cell membrane</keyword>
<keyword id="KW-1043">Host membrane</keyword>
<keyword id="KW-0945">Host-virus interaction</keyword>
<keyword id="KW-0375">Hydrogen ion transport</keyword>
<keyword id="KW-1083">Inhibition of host autophagy by virus</keyword>
<keyword id="KW-0407">Ion channel</keyword>
<keyword id="KW-0406">Ion transport</keyword>
<keyword id="KW-0449">Lipoprotein</keyword>
<keyword id="KW-0472">Membrane</keyword>
<keyword id="KW-0564">Palmitate</keyword>
<keyword id="KW-0597">Phosphoprotein</keyword>
<keyword id="KW-0735">Signal-anchor</keyword>
<keyword id="KW-0812">Transmembrane</keyword>
<keyword id="KW-1133">Transmembrane helix</keyword>
<keyword id="KW-0813">Transport</keyword>
<keyword id="KW-1182">Viral ion channel</keyword>
<keyword id="KW-0946">Virion</keyword>
<gene>
    <name evidence="1" type="primary">M</name>
</gene>
<reference key="1">
    <citation type="journal article" date="2006" name="Science">
        <title>Large-scale sequence analysis of avian influenza isolates.</title>
        <authorList>
            <person name="Obenauer J.C."/>
            <person name="Denson J."/>
            <person name="Mehta P.K."/>
            <person name="Su X."/>
            <person name="Mukatira S."/>
            <person name="Finkelstein D.B."/>
            <person name="Xu X."/>
            <person name="Wang J."/>
            <person name="Ma J."/>
            <person name="Fan Y."/>
            <person name="Rakestraw K.M."/>
            <person name="Webster R.G."/>
            <person name="Hoffmann E."/>
            <person name="Krauss S."/>
            <person name="Zheng J."/>
            <person name="Zhang Z."/>
            <person name="Naeve C.W."/>
        </authorList>
    </citation>
    <scope>NUCLEOTIDE SEQUENCE [GENOMIC RNA]</scope>
</reference>
<protein>
    <recommendedName>
        <fullName evidence="1">Matrix protein 2</fullName>
    </recommendedName>
    <alternativeName>
        <fullName evidence="1">Proton channel protein M2</fullName>
    </alternativeName>
</protein>